<organism>
    <name type="scientific">Desulforapulum autotrophicum (strain ATCC 43914 / DSM 3382 / VKM B-1955 / HRM2)</name>
    <name type="common">Desulfobacterium autotrophicum</name>
    <dbReference type="NCBI Taxonomy" id="177437"/>
    <lineage>
        <taxon>Bacteria</taxon>
        <taxon>Pseudomonadati</taxon>
        <taxon>Thermodesulfobacteriota</taxon>
        <taxon>Desulfobacteria</taxon>
        <taxon>Desulfobacterales</taxon>
        <taxon>Desulfobacteraceae</taxon>
        <taxon>Desulforapulum</taxon>
    </lineage>
</organism>
<evidence type="ECO:0000255" key="1">
    <source>
        <dbReference type="HAMAP-Rule" id="MF_00236"/>
    </source>
</evidence>
<evidence type="ECO:0000256" key="2">
    <source>
        <dbReference type="SAM" id="MobiDB-lite"/>
    </source>
</evidence>
<proteinExistence type="inferred from homology"/>
<protein>
    <recommendedName>
        <fullName evidence="1">Sec-independent protein translocase protein TatA</fullName>
    </recommendedName>
</protein>
<name>TATA_DESAH</name>
<gene>
    <name evidence="1" type="primary">tatA</name>
    <name type="ordered locus">HRM2_06850</name>
</gene>
<sequence length="66" mass="7150">MIGGLGMPELIIILVIILIIFGAGKLPEIGSGIGKGIKNFKKATRDAELNEGDKDDKEKEQEKLDK</sequence>
<reference key="1">
    <citation type="journal article" date="2009" name="Environ. Microbiol.">
        <title>Genome sequence of Desulfobacterium autotrophicum HRM2, a marine sulfate reducer oxidizing organic carbon completely to carbon dioxide.</title>
        <authorList>
            <person name="Strittmatter A.W."/>
            <person name="Liesegang H."/>
            <person name="Rabus R."/>
            <person name="Decker I."/>
            <person name="Amann J."/>
            <person name="Andres S."/>
            <person name="Henne A."/>
            <person name="Fricke W.F."/>
            <person name="Martinez-Arias R."/>
            <person name="Bartels D."/>
            <person name="Goesmann A."/>
            <person name="Krause L."/>
            <person name="Puehler A."/>
            <person name="Klenk H.P."/>
            <person name="Richter M."/>
            <person name="Schuler M."/>
            <person name="Gloeckner F.O."/>
            <person name="Meyerdierks A."/>
            <person name="Gottschalk G."/>
            <person name="Amann R."/>
        </authorList>
    </citation>
    <scope>NUCLEOTIDE SEQUENCE [LARGE SCALE GENOMIC DNA]</scope>
    <source>
        <strain>ATCC 43914 / DSM 3382 / VKM B-1955 / HRM2</strain>
    </source>
</reference>
<keyword id="KW-0997">Cell inner membrane</keyword>
<keyword id="KW-1003">Cell membrane</keyword>
<keyword id="KW-0472">Membrane</keyword>
<keyword id="KW-0653">Protein transport</keyword>
<keyword id="KW-1185">Reference proteome</keyword>
<keyword id="KW-0811">Translocation</keyword>
<keyword id="KW-0812">Transmembrane</keyword>
<keyword id="KW-1133">Transmembrane helix</keyword>
<keyword id="KW-0813">Transport</keyword>
<dbReference type="EMBL" id="CP001087">
    <property type="protein sequence ID" value="ACN13799.1"/>
    <property type="molecule type" value="Genomic_DNA"/>
</dbReference>
<dbReference type="RefSeq" id="WP_012663047.1">
    <property type="nucleotide sequence ID" value="NC_012108.1"/>
</dbReference>
<dbReference type="SMR" id="C0QJ09"/>
<dbReference type="STRING" id="177437.HRM2_06850"/>
<dbReference type="KEGG" id="dat:HRM2_06850"/>
<dbReference type="eggNOG" id="COG1826">
    <property type="taxonomic scope" value="Bacteria"/>
</dbReference>
<dbReference type="HOGENOM" id="CLU_086034_6_1_7"/>
<dbReference type="OrthoDB" id="9813726at2"/>
<dbReference type="Proteomes" id="UP000000442">
    <property type="component" value="Chromosome"/>
</dbReference>
<dbReference type="GO" id="GO:0033281">
    <property type="term" value="C:TAT protein transport complex"/>
    <property type="evidence" value="ECO:0007669"/>
    <property type="project" value="UniProtKB-UniRule"/>
</dbReference>
<dbReference type="GO" id="GO:0008320">
    <property type="term" value="F:protein transmembrane transporter activity"/>
    <property type="evidence" value="ECO:0007669"/>
    <property type="project" value="UniProtKB-UniRule"/>
</dbReference>
<dbReference type="GO" id="GO:0043953">
    <property type="term" value="P:protein transport by the Tat complex"/>
    <property type="evidence" value="ECO:0007669"/>
    <property type="project" value="UniProtKB-UniRule"/>
</dbReference>
<dbReference type="Gene3D" id="1.20.5.3310">
    <property type="match status" value="1"/>
</dbReference>
<dbReference type="HAMAP" id="MF_00236">
    <property type="entry name" value="TatA_E"/>
    <property type="match status" value="1"/>
</dbReference>
<dbReference type="InterPro" id="IPR003369">
    <property type="entry name" value="TatA/B/E"/>
</dbReference>
<dbReference type="InterPro" id="IPR006312">
    <property type="entry name" value="TatA/E"/>
</dbReference>
<dbReference type="NCBIfam" id="NF011430">
    <property type="entry name" value="PRK14861.1"/>
    <property type="match status" value="1"/>
</dbReference>
<dbReference type="NCBIfam" id="TIGR01411">
    <property type="entry name" value="tatAE"/>
    <property type="match status" value="1"/>
</dbReference>
<dbReference type="PANTHER" id="PTHR42982">
    <property type="entry name" value="SEC-INDEPENDENT PROTEIN TRANSLOCASE PROTEIN TATA"/>
    <property type="match status" value="1"/>
</dbReference>
<dbReference type="PANTHER" id="PTHR42982:SF1">
    <property type="entry name" value="SEC-INDEPENDENT PROTEIN TRANSLOCASE PROTEIN TATA"/>
    <property type="match status" value="1"/>
</dbReference>
<dbReference type="Pfam" id="PF02416">
    <property type="entry name" value="TatA_B_E"/>
    <property type="match status" value="1"/>
</dbReference>
<comment type="function">
    <text evidence="1">Part of the twin-arginine translocation (Tat) system that transports large folded proteins containing a characteristic twin-arginine motif in their signal peptide across membranes. TatA could form the protein-conducting channel of the Tat system.</text>
</comment>
<comment type="subunit">
    <text evidence="1">The Tat system comprises two distinct complexes: a TatABC complex, containing multiple copies of TatA, TatB and TatC subunits, and a separate TatA complex, containing only TatA subunits. Substrates initially bind to the TatABC complex, which probably triggers association of the separate TatA complex to form the active translocon.</text>
</comment>
<comment type="subcellular location">
    <subcellularLocation>
        <location evidence="1">Cell inner membrane</location>
        <topology evidence="1">Single-pass membrane protein</topology>
    </subcellularLocation>
</comment>
<comment type="similarity">
    <text evidence="1">Belongs to the TatA/E family.</text>
</comment>
<accession>C0QJ09</accession>
<feature type="chain" id="PRO_1000204437" description="Sec-independent protein translocase protein TatA">
    <location>
        <begin position="1"/>
        <end position="66"/>
    </location>
</feature>
<feature type="transmembrane region" description="Helical" evidence="1">
    <location>
        <begin position="1"/>
        <end position="21"/>
    </location>
</feature>
<feature type="region of interest" description="Disordered" evidence="2">
    <location>
        <begin position="45"/>
        <end position="66"/>
    </location>
</feature>